<protein>
    <recommendedName>
        <fullName>Protein flp</fullName>
    </recommendedName>
    <alternativeName>
        <fullName>FmtA-like protein</fullName>
    </alternativeName>
</protein>
<sequence length="498" mass="56496">MTTKKLYFLSISIIILVAISIAIYITLNSNTKTRLTNDSQQQIDKIIEHDLQKGHIPGASILIVKNGKVFLNKGYGYQDVDKKVKASPTTKYEIASNTKAFTGLAILKLAQEGRLNLNDDVSKHVPHFKMNYNGQNETITIKQLLAQTSGIPSDITSEDAVTNKNNRLNDVTRAIMGDELHHKPGEEFEYSNMNYDLLGLIIQNVTKQSYTKYITNSWLKPLHMTHTSFKQTNNKSKHDAIGYELQGSTPVVSKPEFNLWDTPSAYMMTSTEDLEHWIKFQLNPPDKYKSLVQQSHKNLSSTIGEPNANAYASGWFTNNDEHLVFHSGTLDNFSSFILLNPKQNYGIVVLANLNSEYVPKLVEHLNTQIVNHKRYSTVASILNQYKDQFNIVTVLMTTLILLAFIFSAYRAWQMRHGQILLRRSKRIAVLSWLTLCLCIAIALILYALPYLILGSNNWSFVLTWLPIEIKLALITTLIALFSTLIVILLFLHTKITKT</sequence>
<name>FLP_STAAN</name>
<organism>
    <name type="scientific">Staphylococcus aureus (strain N315)</name>
    <dbReference type="NCBI Taxonomy" id="158879"/>
    <lineage>
        <taxon>Bacteria</taxon>
        <taxon>Bacillati</taxon>
        <taxon>Bacillota</taxon>
        <taxon>Bacilli</taxon>
        <taxon>Bacillales</taxon>
        <taxon>Staphylococcaceae</taxon>
        <taxon>Staphylococcus</taxon>
    </lineage>
</organism>
<reference key="1">
    <citation type="journal article" date="2001" name="Lancet">
        <title>Whole genome sequencing of meticillin-resistant Staphylococcus aureus.</title>
        <authorList>
            <person name="Kuroda M."/>
            <person name="Ohta T."/>
            <person name="Uchiyama I."/>
            <person name="Baba T."/>
            <person name="Yuzawa H."/>
            <person name="Kobayashi I."/>
            <person name="Cui L."/>
            <person name="Oguchi A."/>
            <person name="Aoki K."/>
            <person name="Nagai Y."/>
            <person name="Lian J.-Q."/>
            <person name="Ito T."/>
            <person name="Kanamori M."/>
            <person name="Matsumaru H."/>
            <person name="Maruyama A."/>
            <person name="Murakami H."/>
            <person name="Hosoyama A."/>
            <person name="Mizutani-Ui Y."/>
            <person name="Takahashi N.K."/>
            <person name="Sawano T."/>
            <person name="Inoue R."/>
            <person name="Kaito C."/>
            <person name="Sekimizu K."/>
            <person name="Hirakawa H."/>
            <person name="Kuhara S."/>
            <person name="Goto S."/>
            <person name="Yabuzaki J."/>
            <person name="Kanehisa M."/>
            <person name="Yamashita A."/>
            <person name="Oshima K."/>
            <person name="Furuya K."/>
            <person name="Yoshino C."/>
            <person name="Shiba T."/>
            <person name="Hattori M."/>
            <person name="Ogasawara N."/>
            <person name="Hayashi H."/>
            <person name="Hiramatsu K."/>
        </authorList>
    </citation>
    <scope>NUCLEOTIDE SEQUENCE [LARGE SCALE GENOMIC DNA]</scope>
    <source>
        <strain>N315</strain>
    </source>
</reference>
<comment type="function">
    <text evidence="1">Its precise function is unknown. Has no penicillin-binding activity and is not involved in methicillin resistance (By similarity).</text>
</comment>
<comment type="subcellular location">
    <subcellularLocation>
        <location evidence="3">Cell membrane</location>
        <topology evidence="3">Multi-pass membrane protein</topology>
    </subcellularLocation>
</comment>
<comment type="miscellaneous">
    <text evidence="1">Has two of three conserved motifs typically found in penicillin-binding proteins (PBPs) and beta-lactamases, but no penicillin-binding activity has been detected.</text>
</comment>
<accession>Q7A3Q5</accession>
<keyword id="KW-0002">3D-structure</keyword>
<keyword id="KW-1003">Cell membrane</keyword>
<keyword id="KW-0472">Membrane</keyword>
<keyword id="KW-0812">Transmembrane</keyword>
<keyword id="KW-1133">Transmembrane helix</keyword>
<evidence type="ECO:0000250" key="1"/>
<evidence type="ECO:0000255" key="2"/>
<evidence type="ECO:0000305" key="3"/>
<evidence type="ECO:0007829" key="4">
    <source>
        <dbReference type="PDB" id="4GDN"/>
    </source>
</evidence>
<proteinExistence type="evidence at protein level"/>
<gene>
    <name type="primary">flp</name>
    <name type="ordered locus">SA2230</name>
</gene>
<feature type="chain" id="PRO_0000087306" description="Protein flp">
    <location>
        <begin position="1"/>
        <end position="498"/>
    </location>
</feature>
<feature type="transmembrane region" description="Helical" evidence="2">
    <location>
        <begin position="6"/>
        <end position="26"/>
    </location>
</feature>
<feature type="transmembrane region" description="Helical" evidence="2">
    <location>
        <begin position="389"/>
        <end position="409"/>
    </location>
</feature>
<feature type="transmembrane region" description="Helical" evidence="2">
    <location>
        <begin position="433"/>
        <end position="453"/>
    </location>
</feature>
<feature type="transmembrane region" description="Helical" evidence="2">
    <location>
        <begin position="471"/>
        <end position="491"/>
    </location>
</feature>
<feature type="helix" evidence="4">
    <location>
        <begin position="43"/>
        <end position="54"/>
    </location>
</feature>
<feature type="strand" evidence="4">
    <location>
        <begin position="57"/>
        <end position="65"/>
    </location>
</feature>
<feature type="strand" evidence="4">
    <location>
        <begin position="68"/>
        <end position="79"/>
    </location>
</feature>
<feature type="turn" evidence="4">
    <location>
        <begin position="80"/>
        <end position="83"/>
    </location>
</feature>
<feature type="strand" evidence="4">
    <location>
        <begin position="91"/>
        <end position="93"/>
    </location>
</feature>
<feature type="helix" evidence="4">
    <location>
        <begin position="95"/>
        <end position="98"/>
    </location>
</feature>
<feature type="helix" evidence="4">
    <location>
        <begin position="99"/>
        <end position="112"/>
    </location>
</feature>
<feature type="helix" evidence="4">
    <location>
        <begin position="121"/>
        <end position="123"/>
    </location>
</feature>
<feature type="helix" evidence="4">
    <location>
        <begin position="141"/>
        <end position="145"/>
    </location>
</feature>
<feature type="helix" evidence="4">
    <location>
        <begin position="172"/>
        <end position="176"/>
    </location>
</feature>
<feature type="strand" evidence="4">
    <location>
        <begin position="181"/>
        <end position="183"/>
    </location>
</feature>
<feature type="helix" evidence="4">
    <location>
        <begin position="192"/>
        <end position="206"/>
    </location>
</feature>
<feature type="helix" evidence="4">
    <location>
        <begin position="210"/>
        <end position="217"/>
    </location>
</feature>
<feature type="turn" evidence="4">
    <location>
        <begin position="218"/>
        <end position="223"/>
    </location>
</feature>
<feature type="strand" evidence="4">
    <location>
        <begin position="237"/>
        <end position="239"/>
    </location>
</feature>
<feature type="strand" evidence="4">
    <location>
        <begin position="243"/>
        <end position="246"/>
    </location>
</feature>
<feature type="strand" evidence="4">
    <location>
        <begin position="249"/>
        <end position="252"/>
    </location>
</feature>
<feature type="helix" evidence="4">
    <location>
        <begin position="259"/>
        <end position="261"/>
    </location>
</feature>
<feature type="helix" evidence="4">
    <location>
        <begin position="262"/>
        <end position="265"/>
    </location>
</feature>
<feature type="strand" evidence="4">
    <location>
        <begin position="267"/>
        <end position="270"/>
    </location>
</feature>
<feature type="helix" evidence="4">
    <location>
        <begin position="271"/>
        <end position="282"/>
    </location>
</feature>
<feature type="helix" evidence="4">
    <location>
        <begin position="286"/>
        <end position="296"/>
    </location>
</feature>
<feature type="strand" evidence="4">
    <location>
        <begin position="303"/>
        <end position="305"/>
    </location>
</feature>
<feature type="strand" evidence="4">
    <location>
        <begin position="309"/>
        <end position="312"/>
    </location>
</feature>
<feature type="strand" evidence="4">
    <location>
        <begin position="315"/>
        <end position="318"/>
    </location>
</feature>
<feature type="turn" evidence="4">
    <location>
        <begin position="319"/>
        <end position="322"/>
    </location>
</feature>
<feature type="strand" evidence="4">
    <location>
        <begin position="323"/>
        <end position="329"/>
    </location>
</feature>
<feature type="strand" evidence="4">
    <location>
        <begin position="334"/>
        <end position="340"/>
    </location>
</feature>
<feature type="helix" evidence="4">
    <location>
        <begin position="342"/>
        <end position="344"/>
    </location>
</feature>
<feature type="strand" evidence="4">
    <location>
        <begin position="345"/>
        <end position="353"/>
    </location>
</feature>
<feature type="helix" evidence="4">
    <location>
        <begin position="357"/>
        <end position="367"/>
    </location>
</feature>
<dbReference type="EMBL" id="BA000018">
    <property type="protein sequence ID" value="BAB43532.1"/>
    <property type="molecule type" value="Genomic_DNA"/>
</dbReference>
<dbReference type="PIR" id="B99946">
    <property type="entry name" value="B99946"/>
</dbReference>
<dbReference type="RefSeq" id="WP_000208563.1">
    <property type="nucleotide sequence ID" value="NC_002745.2"/>
</dbReference>
<dbReference type="PDB" id="4GDN">
    <property type="method" value="X-ray"/>
    <property type="resolution" value="3.20 A"/>
    <property type="chains" value="A/B/C/D=30-370"/>
</dbReference>
<dbReference type="PDBsum" id="4GDN"/>
<dbReference type="SMR" id="Q7A3Q5"/>
<dbReference type="MEROPS" id="S12.011"/>
<dbReference type="EnsemblBacteria" id="BAB43532">
    <property type="protein sequence ID" value="BAB43532"/>
    <property type="gene ID" value="BAB43532"/>
</dbReference>
<dbReference type="KEGG" id="sau:SA2230"/>
<dbReference type="HOGENOM" id="CLU_020027_4_2_9"/>
<dbReference type="EvolutionaryTrace" id="Q7A3Q5"/>
<dbReference type="GO" id="GO:0005886">
    <property type="term" value="C:plasma membrane"/>
    <property type="evidence" value="ECO:0007669"/>
    <property type="project" value="UniProtKB-SubCell"/>
</dbReference>
<dbReference type="Gene3D" id="3.40.710.10">
    <property type="entry name" value="DD-peptidase/beta-lactamase superfamily"/>
    <property type="match status" value="1"/>
</dbReference>
<dbReference type="InterPro" id="IPR050491">
    <property type="entry name" value="Bact_CellWall_Synth/Modif"/>
</dbReference>
<dbReference type="InterPro" id="IPR001466">
    <property type="entry name" value="Beta-lactam-related"/>
</dbReference>
<dbReference type="InterPro" id="IPR012338">
    <property type="entry name" value="Beta-lactam/transpept-like"/>
</dbReference>
<dbReference type="PANTHER" id="PTHR46825">
    <property type="entry name" value="D-ALANYL-D-ALANINE-CARBOXYPEPTIDASE/ENDOPEPTIDASE AMPH"/>
    <property type="match status" value="1"/>
</dbReference>
<dbReference type="PANTHER" id="PTHR46825:SF11">
    <property type="entry name" value="PENICILLIN-BINDING PROTEIN 4"/>
    <property type="match status" value="1"/>
</dbReference>
<dbReference type="Pfam" id="PF00144">
    <property type="entry name" value="Beta-lactamase"/>
    <property type="match status" value="1"/>
</dbReference>
<dbReference type="SUPFAM" id="SSF56601">
    <property type="entry name" value="beta-lactamase/transpeptidase-like"/>
    <property type="match status" value="1"/>
</dbReference>